<feature type="chain" id="PRO_0000436521" description="RNA polymerase sigma factor SigI7">
    <location>
        <begin position="1"/>
        <end position="235"/>
    </location>
</feature>
<feature type="DNA-binding region" description="H-T-H motif" evidence="1">
    <location>
        <begin position="191"/>
        <end position="210"/>
    </location>
</feature>
<feature type="short sequence motif" description="Polymerase core binding" evidence="1">
    <location>
        <begin position="49"/>
        <end position="62"/>
    </location>
</feature>
<protein>
    <recommendedName>
        <fullName evidence="4">RNA polymerase sigma factor SigI7</fullName>
    </recommendedName>
</protein>
<proteinExistence type="evidence at transcript level"/>
<comment type="function">
    <text evidence="1">Sigma factors are initiation factors that promote the attachment of RNA polymerase to specific initiation sites and are then released.</text>
</comment>
<comment type="activity regulation">
    <text evidence="1">Negatively regulated by the anti-sigma-I factor RsgI7.</text>
</comment>
<comment type="subunit">
    <text evidence="1">Interacts with RsgI7.</text>
</comment>
<comment type="subcellular location">
    <subcellularLocation>
        <location evidence="1">Cytoplasm</location>
    </subcellularLocation>
</comment>
<comment type="induction">
    <text evidence="2">Up-regulated in pretreated yellow poplar (PYP)-grown cells.</text>
</comment>
<comment type="similarity">
    <text evidence="1">Belongs to the sigma-70 factor family. SigI subfamily.</text>
</comment>
<evidence type="ECO:0000255" key="1">
    <source>
        <dbReference type="HAMAP-Rule" id="MF_02064"/>
    </source>
</evidence>
<evidence type="ECO:0000269" key="2">
    <source>
    </source>
</evidence>
<evidence type="ECO:0000303" key="3">
    <source>
    </source>
</evidence>
<evidence type="ECO:0000305" key="4"/>
<evidence type="ECO:0000312" key="5">
    <source>
        <dbReference type="EMBL" id="ABN53723.1"/>
    </source>
</evidence>
<dbReference type="EMBL" id="CP000568">
    <property type="protein sequence ID" value="ABN53723.1"/>
    <property type="molecule type" value="Genomic_DNA"/>
</dbReference>
<dbReference type="RefSeq" id="WP_020457849.1">
    <property type="nucleotide sequence ID" value="NC_009012.1"/>
</dbReference>
<dbReference type="SMR" id="A3DIE4"/>
<dbReference type="STRING" id="203119.Cthe_2521"/>
<dbReference type="GeneID" id="35804468"/>
<dbReference type="KEGG" id="cth:Cthe_2521"/>
<dbReference type="eggNOG" id="COG1191">
    <property type="taxonomic scope" value="Bacteria"/>
</dbReference>
<dbReference type="HOGENOM" id="CLU_082361_0_0_9"/>
<dbReference type="OrthoDB" id="3190733at2"/>
<dbReference type="Proteomes" id="UP000002145">
    <property type="component" value="Chromosome"/>
</dbReference>
<dbReference type="GO" id="GO:0005737">
    <property type="term" value="C:cytoplasm"/>
    <property type="evidence" value="ECO:0007669"/>
    <property type="project" value="UniProtKB-SubCell"/>
</dbReference>
<dbReference type="GO" id="GO:0003677">
    <property type="term" value="F:DNA binding"/>
    <property type="evidence" value="ECO:0007669"/>
    <property type="project" value="UniProtKB-UniRule"/>
</dbReference>
<dbReference type="GO" id="GO:0016987">
    <property type="term" value="F:sigma factor activity"/>
    <property type="evidence" value="ECO:0007669"/>
    <property type="project" value="UniProtKB-UniRule"/>
</dbReference>
<dbReference type="GO" id="GO:0006352">
    <property type="term" value="P:DNA-templated transcription initiation"/>
    <property type="evidence" value="ECO:0007669"/>
    <property type="project" value="UniProtKB-UniRule"/>
</dbReference>
<dbReference type="Gene3D" id="1.10.1740.10">
    <property type="match status" value="1"/>
</dbReference>
<dbReference type="HAMAP" id="MF_02064">
    <property type="entry name" value="Sigma70_SigI"/>
    <property type="match status" value="1"/>
</dbReference>
<dbReference type="InterPro" id="IPR014284">
    <property type="entry name" value="RNA_pol_sigma-70_dom"/>
</dbReference>
<dbReference type="InterPro" id="IPR014244">
    <property type="entry name" value="RNA_pol_sigma-I"/>
</dbReference>
<dbReference type="InterPro" id="IPR007627">
    <property type="entry name" value="RNA_pol_sigma70_r2"/>
</dbReference>
<dbReference type="InterPro" id="IPR013325">
    <property type="entry name" value="RNA_pol_sigma_r2"/>
</dbReference>
<dbReference type="NCBIfam" id="NF006178">
    <property type="entry name" value="PRK08311.2-6"/>
    <property type="match status" value="1"/>
</dbReference>
<dbReference type="NCBIfam" id="TIGR02937">
    <property type="entry name" value="sigma70-ECF"/>
    <property type="match status" value="1"/>
</dbReference>
<dbReference type="NCBIfam" id="TIGR02895">
    <property type="entry name" value="spore_sigI"/>
    <property type="match status" value="1"/>
</dbReference>
<dbReference type="Pfam" id="PF04542">
    <property type="entry name" value="Sigma70_r2"/>
    <property type="match status" value="1"/>
</dbReference>
<dbReference type="PIRSF" id="PIRSF038953">
    <property type="entry name" value="SigI"/>
    <property type="match status" value="1"/>
</dbReference>
<dbReference type="SUPFAM" id="SSF88946">
    <property type="entry name" value="Sigma2 domain of RNA polymerase sigma factors"/>
    <property type="match status" value="1"/>
</dbReference>
<reference key="1">
    <citation type="submission" date="2007-02" db="EMBL/GenBank/DDBJ databases">
        <title>Complete sequence of Clostridium thermocellum ATCC 27405.</title>
        <authorList>
            <consortium name="US DOE Joint Genome Institute"/>
            <person name="Copeland A."/>
            <person name="Lucas S."/>
            <person name="Lapidus A."/>
            <person name="Barry K."/>
            <person name="Detter J.C."/>
            <person name="Glavina del Rio T."/>
            <person name="Hammon N."/>
            <person name="Israni S."/>
            <person name="Dalin E."/>
            <person name="Tice H."/>
            <person name="Pitluck S."/>
            <person name="Chertkov O."/>
            <person name="Brettin T."/>
            <person name="Bruce D."/>
            <person name="Han C."/>
            <person name="Tapia R."/>
            <person name="Gilna P."/>
            <person name="Schmutz J."/>
            <person name="Larimer F."/>
            <person name="Land M."/>
            <person name="Hauser L."/>
            <person name="Kyrpides N."/>
            <person name="Mikhailova N."/>
            <person name="Wu J.H.D."/>
            <person name="Newcomb M."/>
            <person name="Richardson P."/>
        </authorList>
    </citation>
    <scope>NUCLEOTIDE SEQUENCE [LARGE SCALE GENOMIC DNA]</scope>
    <source>
        <strain>ATCC 27405 / DSM 1237 / JCM 9322 / NBRC 103400 / NCIMB 10682 / NRRL B-4536 / VPI 7372</strain>
    </source>
</reference>
<reference key="2">
    <citation type="journal article" date="2010" name="FEMS Microbiol. Lett.">
        <title>The unique set of putative membrane-associated anti-sigma factors in Clostridium thermocellum suggests a novel extracellular carbohydrate-sensing mechanism involved in gene regulation.</title>
        <authorList>
            <person name="Kahel-Raifer H."/>
            <person name="Jindou S."/>
            <person name="Bahari L."/>
            <person name="Nataf Y."/>
            <person name="Shoham Y."/>
            <person name="Bayer E.A."/>
            <person name="Borovok I."/>
            <person name="Lamed R."/>
        </authorList>
    </citation>
    <scope>NOMENCLATURE</scope>
    <source>
        <strain>ATCC 27405 / DSM 1237 / JCM 9322 / NBRC 103400 / NCIMB 10682 / NRRL B-4536 / VPI 7372</strain>
    </source>
</reference>
<reference key="3">
    <citation type="journal article" date="2014" name="Front. Microbiol.">
        <title>Comparison of transcriptional profiles of Clostridium thermocellum grown on cellobiose and pretreated yellow poplar using RNA-Seq.</title>
        <authorList>
            <person name="Wei H."/>
            <person name="Fu Y."/>
            <person name="Magnusson L."/>
            <person name="Baker J.O."/>
            <person name="Maness P.C."/>
            <person name="Xu Q."/>
            <person name="Yang S."/>
            <person name="Bowersox A."/>
            <person name="Bogorad I."/>
            <person name="Wang W."/>
            <person name="Tucker M.P."/>
            <person name="Himmel M.E."/>
            <person name="Ding S.Y."/>
        </authorList>
    </citation>
    <scope>INDUCTION</scope>
    <source>
        <strain>ATCC 27405 / DSM 1237 / JCM 9322 / NBRC 103400 / NCIMB 10682 / NRRL B-4536 / VPI 7372</strain>
    </source>
</reference>
<organism>
    <name type="scientific">Acetivibrio thermocellus (strain ATCC 27405 / DSM 1237 / JCM 9322 / NBRC 103400 / NCIMB 10682 / NRRL B-4536 / VPI 7372)</name>
    <name type="common">Clostridium thermocellum</name>
    <dbReference type="NCBI Taxonomy" id="203119"/>
    <lineage>
        <taxon>Bacteria</taxon>
        <taxon>Bacillati</taxon>
        <taxon>Bacillota</taxon>
        <taxon>Clostridia</taxon>
        <taxon>Eubacteriales</taxon>
        <taxon>Oscillospiraceae</taxon>
        <taxon>Acetivibrio</taxon>
    </lineage>
</organism>
<name>SIGI7_ACET2</name>
<sequence>MYSVTINQRVEAIKNNEEEINLFVEEYKPFIAACTQKVVGRYVAYGQDDELSIALMAFVETIRSYDVSKGNFLSFSQNVIKRRIIDYYRKEKKHSVVVNINGHLEDEEEETDLGIAMSIDKYSEEEISEYRRLELEQLKKELKEWDISFFDLVNISPKHKRTKKIYSKIIKFVLSRPDIMEKIKQKKYLPVAEIEQSLKIPRKTIERARKYIITVVIIFTGDYEFIRDYVNWEVE</sequence>
<keyword id="KW-0963">Cytoplasm</keyword>
<keyword id="KW-0238">DNA-binding</keyword>
<keyword id="KW-1185">Reference proteome</keyword>
<keyword id="KW-0731">Sigma factor</keyword>
<keyword id="KW-0804">Transcription</keyword>
<keyword id="KW-0805">Transcription regulation</keyword>
<accession>A3DIE4</accession>
<gene>
    <name evidence="3" type="primary">sigI7</name>
    <name evidence="5" type="ordered locus">Cthe_2521</name>
</gene>